<evidence type="ECO:0000255" key="1"/>
<evidence type="ECO:0000305" key="2"/>
<keyword id="KW-0472">Membrane</keyword>
<keyword id="KW-0496">Mitochondrion</keyword>
<keyword id="KW-0999">Mitochondrion inner membrane</keyword>
<keyword id="KW-1185">Reference proteome</keyword>
<keyword id="KW-0677">Repeat</keyword>
<keyword id="KW-0812">Transmembrane</keyword>
<keyword id="KW-1133">Transmembrane helix</keyword>
<keyword id="KW-0813">Transport</keyword>
<protein>
    <recommendedName>
        <fullName>Uncharacterized mitochondrial carrier YFR045W</fullName>
    </recommendedName>
</protein>
<proteinExistence type="inferred from homology"/>
<dbReference type="EMBL" id="D50617">
    <property type="protein sequence ID" value="BAA09284.1"/>
    <property type="status" value="ALT_SEQ"/>
    <property type="molecule type" value="Genomic_DNA"/>
</dbReference>
<dbReference type="EMBL" id="AF419345">
    <property type="protein sequence ID" value="AAL26494.1"/>
    <property type="status" value="ALT_INIT"/>
    <property type="molecule type" value="Genomic_DNA"/>
</dbReference>
<dbReference type="EMBL" id="AY558474">
    <property type="protein sequence ID" value="AAS56800.1"/>
    <property type="molecule type" value="Genomic_DNA"/>
</dbReference>
<dbReference type="EMBL" id="BK006940">
    <property type="protein sequence ID" value="DAA12488.1"/>
    <property type="molecule type" value="Genomic_DNA"/>
</dbReference>
<dbReference type="PIR" id="S56300">
    <property type="entry name" value="S56300"/>
</dbReference>
<dbReference type="SMR" id="P43617"/>
<dbReference type="BioGRID" id="31203">
    <property type="interactions" value="101"/>
</dbReference>
<dbReference type="DIP" id="DIP-5570N"/>
<dbReference type="FunCoup" id="P43617">
    <property type="interactions" value="49"/>
</dbReference>
<dbReference type="STRING" id="4932.YFR045W"/>
<dbReference type="PaxDb" id="4932-YFR045W"/>
<dbReference type="PeptideAtlas" id="P43617"/>
<dbReference type="EnsemblFungi" id="YFR045W_mRNA">
    <property type="protein sequence ID" value="YFR045W"/>
    <property type="gene ID" value="YFR045W"/>
</dbReference>
<dbReference type="KEGG" id="sce:YFR045W"/>
<dbReference type="AGR" id="SGD:S000001941"/>
<dbReference type="SGD" id="S000001941">
    <property type="gene designation" value="YFR045W"/>
</dbReference>
<dbReference type="VEuPathDB" id="FungiDB:YFR045W"/>
<dbReference type="eggNOG" id="KOG0756">
    <property type="taxonomic scope" value="Eukaryota"/>
</dbReference>
<dbReference type="HOGENOM" id="CLU_015166_5_1_1"/>
<dbReference type="InParanoid" id="P43617"/>
<dbReference type="OMA" id="TRMQSKY"/>
<dbReference type="OrthoDB" id="44467at2759"/>
<dbReference type="BioCyc" id="YEAST:G3O-30492-MONOMER"/>
<dbReference type="BioGRID-ORCS" id="850606">
    <property type="hits" value="4 hits in 10 CRISPR screens"/>
</dbReference>
<dbReference type="PRO" id="PR:P43617"/>
<dbReference type="Proteomes" id="UP000002311">
    <property type="component" value="Chromosome VI"/>
</dbReference>
<dbReference type="RNAct" id="P43617">
    <property type="molecule type" value="protein"/>
</dbReference>
<dbReference type="GO" id="GO:0005743">
    <property type="term" value="C:mitochondrial inner membrane"/>
    <property type="evidence" value="ECO:0000250"/>
    <property type="project" value="SGD"/>
</dbReference>
<dbReference type="GO" id="GO:0005739">
    <property type="term" value="C:mitochondrion"/>
    <property type="evidence" value="ECO:0000318"/>
    <property type="project" value="GO_Central"/>
</dbReference>
<dbReference type="GO" id="GO:0071913">
    <property type="term" value="F:citrate secondary active transmembrane transporter activity"/>
    <property type="evidence" value="ECO:0000318"/>
    <property type="project" value="GO_Central"/>
</dbReference>
<dbReference type="GO" id="GO:0006843">
    <property type="term" value="P:mitochondrial citrate transmembrane transport"/>
    <property type="evidence" value="ECO:0000318"/>
    <property type="project" value="GO_Central"/>
</dbReference>
<dbReference type="GO" id="GO:0006839">
    <property type="term" value="P:mitochondrial transport"/>
    <property type="evidence" value="ECO:0000250"/>
    <property type="project" value="SGD"/>
</dbReference>
<dbReference type="Gene3D" id="1.50.40.10">
    <property type="entry name" value="Mitochondrial carrier domain"/>
    <property type="match status" value="1"/>
</dbReference>
<dbReference type="InterPro" id="IPR002067">
    <property type="entry name" value="Mit_carrier"/>
</dbReference>
<dbReference type="InterPro" id="IPR018108">
    <property type="entry name" value="Mitochondrial_sb/sol_carrier"/>
</dbReference>
<dbReference type="InterPro" id="IPR023395">
    <property type="entry name" value="Mt_carrier_dom_sf"/>
</dbReference>
<dbReference type="InterPro" id="IPR049563">
    <property type="entry name" value="TXTP-like"/>
</dbReference>
<dbReference type="PANTHER" id="PTHR45788:SF5">
    <property type="entry name" value="AFR253WP"/>
    <property type="match status" value="1"/>
</dbReference>
<dbReference type="PANTHER" id="PTHR45788">
    <property type="entry name" value="SUCCINATE/FUMARATE MITOCHONDRIAL TRANSPORTER-RELATED"/>
    <property type="match status" value="1"/>
</dbReference>
<dbReference type="Pfam" id="PF00153">
    <property type="entry name" value="Mito_carr"/>
    <property type="match status" value="3"/>
</dbReference>
<dbReference type="PRINTS" id="PR00926">
    <property type="entry name" value="MITOCARRIER"/>
</dbReference>
<dbReference type="SUPFAM" id="SSF103506">
    <property type="entry name" value="Mitochondrial carrier"/>
    <property type="match status" value="1"/>
</dbReference>
<dbReference type="PROSITE" id="PS50920">
    <property type="entry name" value="SOLCAR"/>
    <property type="match status" value="3"/>
</dbReference>
<comment type="subcellular location">
    <subcellularLocation>
        <location evidence="2">Mitochondrion inner membrane</location>
        <topology evidence="2">Multi-pass membrane protein</topology>
    </subcellularLocation>
</comment>
<comment type="similarity">
    <text evidence="2">Belongs to the mitochondrial carrier (TC 2.A.29) family.</text>
</comment>
<comment type="sequence caution" evidence="2">
    <conflict type="erroneous initiation">
        <sequence resource="EMBL-CDS" id="AAL26494"/>
    </conflict>
</comment>
<comment type="sequence caution" evidence="2">
    <conflict type="erroneous gene model prediction">
        <sequence resource="EMBL-CDS" id="BAA09284"/>
    </conflict>
</comment>
<comment type="sequence caution" evidence="2">
    <conflict type="frameshift">
        <sequence resource="EMBL-CDS" id="BAA09284"/>
    </conflict>
</comment>
<name>YFL5_YEAST</name>
<reference key="1">
    <citation type="journal article" date="1996" name="Yeast">
        <title>Analysis of a 36.2 kb DNA sequence including the right telomere of chromosome VI from Saccharomyces cerevisiae.</title>
        <authorList>
            <person name="Eki T."/>
            <person name="Naitou M."/>
            <person name="Hagiwara H."/>
            <person name="Ozawa M."/>
            <person name="Sasanuma S."/>
            <person name="Sasanuma M."/>
            <person name="Tsuchiya Y."/>
            <person name="Shibata T."/>
            <person name="Hanaoka F."/>
            <person name="Murakami Y."/>
        </authorList>
    </citation>
    <scope>NUCLEOTIDE SEQUENCE [GENOMIC DNA]</scope>
    <source>
        <strain>ATCC 204511 / S288c / AB972</strain>
    </source>
</reference>
<reference key="2">
    <citation type="journal article" date="1995" name="Nat. Genet.">
        <title>Analysis of the nucleotide sequence of chromosome VI from Saccharomyces cerevisiae.</title>
        <authorList>
            <person name="Murakami Y."/>
            <person name="Naitou M."/>
            <person name="Hagiwara H."/>
            <person name="Shibata T."/>
            <person name="Ozawa M."/>
            <person name="Sasanuma S."/>
            <person name="Sasanuma M."/>
            <person name="Tsuchiya Y."/>
            <person name="Soeda E."/>
            <person name="Yokoyama K."/>
            <person name="Yamazaki M."/>
            <person name="Tashiro H."/>
            <person name="Eki T."/>
        </authorList>
    </citation>
    <scope>NUCLEOTIDE SEQUENCE [LARGE SCALE GENOMIC DNA]</scope>
    <source>
        <strain>ATCC 204508 / S288c</strain>
    </source>
</reference>
<reference key="3">
    <citation type="journal article" date="2014" name="G3 (Bethesda)">
        <title>The reference genome sequence of Saccharomyces cerevisiae: Then and now.</title>
        <authorList>
            <person name="Engel S.R."/>
            <person name="Dietrich F.S."/>
            <person name="Fisk D.G."/>
            <person name="Binkley G."/>
            <person name="Balakrishnan R."/>
            <person name="Costanzo M.C."/>
            <person name="Dwight S.S."/>
            <person name="Hitz B.C."/>
            <person name="Karra K."/>
            <person name="Nash R.S."/>
            <person name="Weng S."/>
            <person name="Wong E.D."/>
            <person name="Lloyd P."/>
            <person name="Skrzypek M.S."/>
            <person name="Miyasato S.R."/>
            <person name="Simison M."/>
            <person name="Cherry J.M."/>
        </authorList>
    </citation>
    <scope>GENOME REANNOTATION</scope>
    <source>
        <strain>ATCC 204508 / S288c</strain>
    </source>
</reference>
<reference key="4">
    <citation type="journal article" date="2000" name="Biochim. Biophys. Acta">
        <title>The yeast mitochondrial transport proteins: new sequences and consensus residues, lack of direct relation between consensus residues and transmembrane helices, expression patterns of the transport protein genes, and protein-protein interactions with other proteins.</title>
        <authorList>
            <person name="Belenkiy R."/>
            <person name="Haefele A."/>
            <person name="Eisen M.B."/>
            <person name="Wohlrab H."/>
        </authorList>
    </citation>
    <scope>NUCLEOTIDE SEQUENCE [GENOMIC DNA] OF 5-309</scope>
    <scope>IDENTIFICATION OF FRAMESHIFT</scope>
</reference>
<reference key="5">
    <citation type="journal article" date="2007" name="Genome Res.">
        <title>Approaching a complete repository of sequence-verified protein-encoding clones for Saccharomyces cerevisiae.</title>
        <authorList>
            <person name="Hu Y."/>
            <person name="Rolfs A."/>
            <person name="Bhullar B."/>
            <person name="Murthy T.V.S."/>
            <person name="Zhu C."/>
            <person name="Berger M.F."/>
            <person name="Camargo A.A."/>
            <person name="Kelley F."/>
            <person name="McCarron S."/>
            <person name="Jepson D."/>
            <person name="Richardson A."/>
            <person name="Raphael J."/>
            <person name="Moreira D."/>
            <person name="Taycher E."/>
            <person name="Zuo D."/>
            <person name="Mohr S."/>
            <person name="Kane M.F."/>
            <person name="Williamson J."/>
            <person name="Simpson A.J.G."/>
            <person name="Bulyk M.L."/>
            <person name="Harlow E."/>
            <person name="Marsischky G."/>
            <person name="Kolodner R.D."/>
            <person name="LaBaer J."/>
        </authorList>
    </citation>
    <scope>NUCLEOTIDE SEQUENCE [GENOMIC DNA] OF 132-309</scope>
    <source>
        <strain>ATCC 204508 / S288c</strain>
    </source>
</reference>
<reference key="6">
    <citation type="journal article" date="2006" name="Proc. Natl. Acad. Sci. U.S.A.">
        <title>A large-scale full-length cDNA analysis to explore the budding yeast transcriptome.</title>
        <authorList>
            <person name="Miura F."/>
            <person name="Kawaguchi N."/>
            <person name="Sese J."/>
            <person name="Toyoda A."/>
            <person name="Hattori M."/>
            <person name="Morishita S."/>
            <person name="Ito T."/>
        </authorList>
    </citation>
    <scope>IDENTIFICATION OF INTRON</scope>
</reference>
<feature type="chain" id="PRO_0000090695" description="Uncharacterized mitochondrial carrier YFR045W">
    <location>
        <begin position="1"/>
        <end position="309"/>
    </location>
</feature>
<feature type="transmembrane region" description="Helical; Name=1" evidence="1">
    <location>
        <begin position="12"/>
        <end position="32"/>
    </location>
</feature>
<feature type="transmembrane region" description="Helical; Name=2" evidence="1">
    <location>
        <begin position="47"/>
        <end position="67"/>
    </location>
</feature>
<feature type="transmembrane region" description="Helical; Name=3" evidence="1">
    <location>
        <begin position="100"/>
        <end position="120"/>
    </location>
</feature>
<feature type="transmembrane region" description="Helical; Name=4" evidence="1">
    <location>
        <begin position="184"/>
        <end position="204"/>
    </location>
</feature>
<feature type="transmembrane region" description="Helical; Name=5" evidence="1">
    <location>
        <begin position="222"/>
        <end position="242"/>
    </location>
</feature>
<feature type="transmembrane region" description="Helical; Name=6" evidence="1">
    <location>
        <begin position="285"/>
        <end position="305"/>
    </location>
</feature>
<feature type="repeat" description="Solcar 1">
    <location>
        <begin position="6"/>
        <end position="83"/>
    </location>
</feature>
<feature type="repeat" description="Solcar 2">
    <location>
        <begin position="97"/>
        <end position="211"/>
    </location>
</feature>
<feature type="repeat" description="Solcar 3">
    <location>
        <begin position="216"/>
        <end position="302"/>
    </location>
</feature>
<organism>
    <name type="scientific">Saccharomyces cerevisiae (strain ATCC 204508 / S288c)</name>
    <name type="common">Baker's yeast</name>
    <dbReference type="NCBI Taxonomy" id="559292"/>
    <lineage>
        <taxon>Eukaryota</taxon>
        <taxon>Fungi</taxon>
        <taxon>Dikarya</taxon>
        <taxon>Ascomycota</taxon>
        <taxon>Saccharomycotina</taxon>
        <taxon>Saccharomycetes</taxon>
        <taxon>Saccharomycetales</taxon>
        <taxon>Saccharomycetaceae</taxon>
        <taxon>Saccharomyces</taxon>
    </lineage>
</organism>
<gene>
    <name type="ordered locus">YFR045W</name>
</gene>
<accession>P43617</accession>
<accession>D6VTS8</accession>
<accession>Q96US0</accession>
<sequence>MANQNSDLYKQITAGSVAAVFQTTMTYPFEYLKTGLQLQPKGTAFEIILPQIKSYFVGCSALNVAAFGKTILRFVTFDKLCHSLNNNIDNNDNFQRLTGYNLLIAGTLTGIVESLFIIPFENIKTTLIQSAMIDHKKLEKNQPVVNAKATFHKVATKSTPVARIEKLLPAVKHMYQTRGPAAFVQGTTATIFRQIANTSIQFTAYTAFKRLLQARNDKASSVITGLATSFTLVAMTQPIDVVKTRMMSQNAKTEYKNTLNCMYRIFVQEGMATFWKGSIFRFMKVGISGGLTFTVYEQVSLLLGFSSRS</sequence>